<name>PLY22_ARATH</name>
<comment type="catalytic activity">
    <reaction>
        <text>Eliminative cleavage of (1-&gt;4)-alpha-D-galacturonan to give oligosaccharides with 4-deoxy-alpha-D-galact-4-enuronosyl groups at their non-reducing ends.</text>
        <dbReference type="EC" id="4.2.2.2"/>
    </reaction>
</comment>
<comment type="cofactor">
    <cofactor evidence="1">
        <name>Ca(2+)</name>
        <dbReference type="ChEBI" id="CHEBI:29108"/>
    </cofactor>
    <text evidence="1">Binds 1 Ca(2+) ion. Required for its activity.</text>
</comment>
<comment type="pathway">
    <text>Glycan metabolism; pectin degradation; 2-dehydro-3-deoxy-D-gluconate from pectin: step 2/5.</text>
</comment>
<comment type="similarity">
    <text evidence="3">Belongs to the polysaccharide lyase 1 family.</text>
</comment>
<comment type="sequence caution" evidence="3">
    <conflict type="erroneous initiation">
        <sequence resource="EMBL-CDS" id="BAB10560"/>
    </conflict>
</comment>
<keyword id="KW-0106">Calcium</keyword>
<keyword id="KW-0325">Glycoprotein</keyword>
<keyword id="KW-0456">Lyase</keyword>
<keyword id="KW-0479">Metal-binding</keyword>
<keyword id="KW-1185">Reference proteome</keyword>
<keyword id="KW-0732">Signal</keyword>
<sequence length="432" mass="47895">MFRPNSLLIPSNLSTTKSQRNTMLNSSYLSFALIFFCCILFSALASSLPVSDPELVVEEVHRKINESISRRKLGFFSCGSGNPIDDCWRCDKDWEKNRKRLADCGIGFGKNAIGGRDGEIYVVTDPGNDDPVNPRPGTLRYAVIQDEPLWIIFKRDMTIQLKEELIMNSFKTLDGRGASVHISGGPCITIQYVTNIIIHGLHIHDCKQGGNTYVRDSPEHYGYRTVSDGDGVSIFGGSHVWVDHCSLSNCNDGLIDAIRGSTAITISNNYLTHHNKVMLLGHSDTYEQDKNMQVTIAFNHFGEGLVQRMPRCRHGYFHVVNNDYTHWEMYAIGGSANPTINSQGNRFLAPDDSSSKEVTKHEDAPEDEWRNWNWRSEGDLLLNGAFFTYSGAGPAKSSSYSKASSLAARPSSHVGEITIASGALSCKRGSHC</sequence>
<organism>
    <name type="scientific">Arabidopsis thaliana</name>
    <name type="common">Mouse-ear cress</name>
    <dbReference type="NCBI Taxonomy" id="3702"/>
    <lineage>
        <taxon>Eukaryota</taxon>
        <taxon>Viridiplantae</taxon>
        <taxon>Streptophyta</taxon>
        <taxon>Embryophyta</taxon>
        <taxon>Tracheophyta</taxon>
        <taxon>Spermatophyta</taxon>
        <taxon>Magnoliopsida</taxon>
        <taxon>eudicotyledons</taxon>
        <taxon>Gunneridae</taxon>
        <taxon>Pentapetalae</taxon>
        <taxon>rosids</taxon>
        <taxon>malvids</taxon>
        <taxon>Brassicales</taxon>
        <taxon>Brassicaceae</taxon>
        <taxon>Camelineae</taxon>
        <taxon>Arabidopsis</taxon>
    </lineage>
</organism>
<accession>Q93Z25</accession>
<accession>Q9FMK5</accession>
<protein>
    <recommendedName>
        <fullName>Probable pectate lyase 22</fullName>
        <ecNumber>4.2.2.2</ecNumber>
    </recommendedName>
</protein>
<feature type="signal peptide" evidence="2">
    <location>
        <begin position="1"/>
        <end position="45"/>
    </location>
</feature>
<feature type="chain" id="PRO_0000024887" description="Probable pectate lyase 22">
    <location>
        <begin position="46"/>
        <end position="432"/>
    </location>
</feature>
<feature type="active site" evidence="2">
    <location>
        <position position="308"/>
    </location>
</feature>
<feature type="binding site" evidence="1">
    <location>
        <position position="228"/>
    </location>
    <ligand>
        <name>Ca(2+)</name>
        <dbReference type="ChEBI" id="CHEBI:29108"/>
    </ligand>
</feature>
<feature type="binding site" evidence="1">
    <location>
        <position position="252"/>
    </location>
    <ligand>
        <name>Ca(2+)</name>
        <dbReference type="ChEBI" id="CHEBI:29108"/>
    </ligand>
</feature>
<feature type="binding site" evidence="1">
    <location>
        <position position="256"/>
    </location>
    <ligand>
        <name>Ca(2+)</name>
        <dbReference type="ChEBI" id="CHEBI:29108"/>
    </ligand>
</feature>
<feature type="glycosylation site" description="N-linked (GlcNAc...) asparagine" evidence="2">
    <location>
        <position position="65"/>
    </location>
</feature>
<gene>
    <name type="ordered locus">At5g63180</name>
    <name type="ORF">MDC12_15</name>
</gene>
<dbReference type="EC" id="4.2.2.2"/>
<dbReference type="EMBL" id="AB008265">
    <property type="protein sequence ID" value="BAB10560.1"/>
    <property type="status" value="ALT_INIT"/>
    <property type="molecule type" value="Genomic_DNA"/>
</dbReference>
<dbReference type="EMBL" id="CP002688">
    <property type="protein sequence ID" value="AED97715.1"/>
    <property type="molecule type" value="Genomic_DNA"/>
</dbReference>
<dbReference type="EMBL" id="AY058197">
    <property type="protein sequence ID" value="AAL25610.1"/>
    <property type="molecule type" value="mRNA"/>
</dbReference>
<dbReference type="RefSeq" id="NP_568967.1">
    <property type="nucleotide sequence ID" value="NM_125713.3"/>
</dbReference>
<dbReference type="SMR" id="Q93Z25"/>
<dbReference type="FunCoup" id="Q93Z25">
    <property type="interactions" value="109"/>
</dbReference>
<dbReference type="STRING" id="3702.Q93Z25"/>
<dbReference type="CAZy" id="PL1">
    <property type="family name" value="Polysaccharide Lyase Family 1"/>
</dbReference>
<dbReference type="GlyGen" id="Q93Z25">
    <property type="glycosylation" value="1 site"/>
</dbReference>
<dbReference type="PaxDb" id="3702-AT5G63180.1"/>
<dbReference type="ProteomicsDB" id="234676"/>
<dbReference type="EnsemblPlants" id="AT5G63180.1">
    <property type="protein sequence ID" value="AT5G63180.1"/>
    <property type="gene ID" value="AT5G63180"/>
</dbReference>
<dbReference type="GeneID" id="836439"/>
<dbReference type="Gramene" id="AT5G63180.1">
    <property type="protein sequence ID" value="AT5G63180.1"/>
    <property type="gene ID" value="AT5G63180"/>
</dbReference>
<dbReference type="KEGG" id="ath:AT5G63180"/>
<dbReference type="Araport" id="AT5G63180"/>
<dbReference type="TAIR" id="AT5G63180"/>
<dbReference type="eggNOG" id="ENOG502QQ5F">
    <property type="taxonomic scope" value="Eukaryota"/>
</dbReference>
<dbReference type="HOGENOM" id="CLU_026608_0_1_1"/>
<dbReference type="InParanoid" id="Q93Z25"/>
<dbReference type="OMA" id="IFGARYI"/>
<dbReference type="PhylomeDB" id="Q93Z25"/>
<dbReference type="BioCyc" id="ARA:AT5G63180-MONOMER"/>
<dbReference type="UniPathway" id="UPA00545">
    <property type="reaction ID" value="UER00824"/>
</dbReference>
<dbReference type="PRO" id="PR:Q93Z25"/>
<dbReference type="Proteomes" id="UP000006548">
    <property type="component" value="Chromosome 5"/>
</dbReference>
<dbReference type="ExpressionAtlas" id="Q93Z25">
    <property type="expression patterns" value="baseline and differential"/>
</dbReference>
<dbReference type="GO" id="GO:0009536">
    <property type="term" value="C:plastid"/>
    <property type="evidence" value="ECO:0007005"/>
    <property type="project" value="TAIR"/>
</dbReference>
<dbReference type="GO" id="GO:0046872">
    <property type="term" value="F:metal ion binding"/>
    <property type="evidence" value="ECO:0007669"/>
    <property type="project" value="UniProtKB-KW"/>
</dbReference>
<dbReference type="GO" id="GO:0030570">
    <property type="term" value="F:pectate lyase activity"/>
    <property type="evidence" value="ECO:0007669"/>
    <property type="project" value="UniProtKB-EC"/>
</dbReference>
<dbReference type="GO" id="GO:0045490">
    <property type="term" value="P:pectin catabolic process"/>
    <property type="evidence" value="ECO:0007669"/>
    <property type="project" value="UniProtKB-UniPathway"/>
</dbReference>
<dbReference type="FunFam" id="2.160.20.10:FF:000009">
    <property type="entry name" value="Pectate lyase"/>
    <property type="match status" value="1"/>
</dbReference>
<dbReference type="Gene3D" id="2.160.20.10">
    <property type="entry name" value="Single-stranded right-handed beta-helix, Pectin lyase-like"/>
    <property type="match status" value="1"/>
</dbReference>
<dbReference type="InterPro" id="IPR018082">
    <property type="entry name" value="AmbAllergen"/>
</dbReference>
<dbReference type="InterPro" id="IPR002022">
    <property type="entry name" value="Pec_lyase"/>
</dbReference>
<dbReference type="InterPro" id="IPR012334">
    <property type="entry name" value="Pectin_lyas_fold"/>
</dbReference>
<dbReference type="InterPro" id="IPR011050">
    <property type="entry name" value="Pectin_lyase_fold/virulence"/>
</dbReference>
<dbReference type="InterPro" id="IPR045032">
    <property type="entry name" value="PEL"/>
</dbReference>
<dbReference type="PANTHER" id="PTHR31683">
    <property type="entry name" value="PECTATE LYASE 18-RELATED"/>
    <property type="match status" value="1"/>
</dbReference>
<dbReference type="PANTHER" id="PTHR31683:SF104">
    <property type="entry name" value="PECTATE LYASE 22-RELATED"/>
    <property type="match status" value="1"/>
</dbReference>
<dbReference type="Pfam" id="PF00544">
    <property type="entry name" value="Pectate_lyase_4"/>
    <property type="match status" value="1"/>
</dbReference>
<dbReference type="PRINTS" id="PR00807">
    <property type="entry name" value="AMBALLERGEN"/>
</dbReference>
<dbReference type="SMART" id="SM00656">
    <property type="entry name" value="Amb_all"/>
    <property type="match status" value="1"/>
</dbReference>
<dbReference type="SUPFAM" id="SSF51126">
    <property type="entry name" value="Pectin lyase-like"/>
    <property type="match status" value="1"/>
</dbReference>
<proteinExistence type="evidence at transcript level"/>
<evidence type="ECO:0000250" key="1"/>
<evidence type="ECO:0000255" key="2"/>
<evidence type="ECO:0000305" key="3"/>
<reference key="1">
    <citation type="journal article" date="1997" name="DNA Res.">
        <title>Structural analysis of Arabidopsis thaliana chromosome 5. III. Sequence features of the regions of 1,191,918 bp covered by seventeen physically assigned P1 clones.</title>
        <authorList>
            <person name="Nakamura Y."/>
            <person name="Sato S."/>
            <person name="Kaneko T."/>
            <person name="Kotani H."/>
            <person name="Asamizu E."/>
            <person name="Miyajima N."/>
            <person name="Tabata S."/>
        </authorList>
    </citation>
    <scope>NUCLEOTIDE SEQUENCE [LARGE SCALE GENOMIC DNA]</scope>
    <source>
        <strain>cv. Columbia</strain>
    </source>
</reference>
<reference key="2">
    <citation type="journal article" date="2017" name="Plant J.">
        <title>Araport11: a complete reannotation of the Arabidopsis thaliana reference genome.</title>
        <authorList>
            <person name="Cheng C.Y."/>
            <person name="Krishnakumar V."/>
            <person name="Chan A.P."/>
            <person name="Thibaud-Nissen F."/>
            <person name="Schobel S."/>
            <person name="Town C.D."/>
        </authorList>
    </citation>
    <scope>GENOME REANNOTATION</scope>
    <source>
        <strain>cv. Columbia</strain>
    </source>
</reference>
<reference key="3">
    <citation type="journal article" date="2003" name="Science">
        <title>Empirical analysis of transcriptional activity in the Arabidopsis genome.</title>
        <authorList>
            <person name="Yamada K."/>
            <person name="Lim J."/>
            <person name="Dale J.M."/>
            <person name="Chen H."/>
            <person name="Shinn P."/>
            <person name="Palm C.J."/>
            <person name="Southwick A.M."/>
            <person name="Wu H.C."/>
            <person name="Kim C.J."/>
            <person name="Nguyen M."/>
            <person name="Pham P.K."/>
            <person name="Cheuk R.F."/>
            <person name="Karlin-Newmann G."/>
            <person name="Liu S.X."/>
            <person name="Lam B."/>
            <person name="Sakano H."/>
            <person name="Wu T."/>
            <person name="Yu G."/>
            <person name="Miranda M."/>
            <person name="Quach H.L."/>
            <person name="Tripp M."/>
            <person name="Chang C.H."/>
            <person name="Lee J.M."/>
            <person name="Toriumi M.J."/>
            <person name="Chan M.M."/>
            <person name="Tang C.C."/>
            <person name="Onodera C.S."/>
            <person name="Deng J.M."/>
            <person name="Akiyama K."/>
            <person name="Ansari Y."/>
            <person name="Arakawa T."/>
            <person name="Banh J."/>
            <person name="Banno F."/>
            <person name="Bowser L."/>
            <person name="Brooks S.Y."/>
            <person name="Carninci P."/>
            <person name="Chao Q."/>
            <person name="Choy N."/>
            <person name="Enju A."/>
            <person name="Goldsmith A.D."/>
            <person name="Gurjal M."/>
            <person name="Hansen N.F."/>
            <person name="Hayashizaki Y."/>
            <person name="Johnson-Hopson C."/>
            <person name="Hsuan V.W."/>
            <person name="Iida K."/>
            <person name="Karnes M."/>
            <person name="Khan S."/>
            <person name="Koesema E."/>
            <person name="Ishida J."/>
            <person name="Jiang P.X."/>
            <person name="Jones T."/>
            <person name="Kawai J."/>
            <person name="Kamiya A."/>
            <person name="Meyers C."/>
            <person name="Nakajima M."/>
            <person name="Narusaka M."/>
            <person name="Seki M."/>
            <person name="Sakurai T."/>
            <person name="Satou M."/>
            <person name="Tamse R."/>
            <person name="Vaysberg M."/>
            <person name="Wallender E.K."/>
            <person name="Wong C."/>
            <person name="Yamamura Y."/>
            <person name="Yuan S."/>
            <person name="Shinozaki K."/>
            <person name="Davis R.W."/>
            <person name="Theologis A."/>
            <person name="Ecker J.R."/>
        </authorList>
    </citation>
    <scope>NUCLEOTIDE SEQUENCE [LARGE SCALE MRNA]</scope>
    <source>
        <strain>cv. Columbia</strain>
    </source>
</reference>